<proteinExistence type="inferred from homology"/>
<accession>A1TUP2</accession>
<comment type="function">
    <text evidence="1">Catalyzes the ATP-dependent phosphorylation of N-acetyl-L-glutamate.</text>
</comment>
<comment type="catalytic activity">
    <reaction evidence="1">
        <text>N-acetyl-L-glutamate + ATP = N-acetyl-L-glutamyl 5-phosphate + ADP</text>
        <dbReference type="Rhea" id="RHEA:14629"/>
        <dbReference type="ChEBI" id="CHEBI:30616"/>
        <dbReference type="ChEBI" id="CHEBI:44337"/>
        <dbReference type="ChEBI" id="CHEBI:57936"/>
        <dbReference type="ChEBI" id="CHEBI:456216"/>
        <dbReference type="EC" id="2.7.2.8"/>
    </reaction>
</comment>
<comment type="pathway">
    <text evidence="1">Amino-acid biosynthesis; L-arginine biosynthesis; N(2)-acetyl-L-ornithine from L-glutamate: step 2/4.</text>
</comment>
<comment type="subcellular location">
    <subcellularLocation>
        <location evidence="1">Cytoplasm</location>
    </subcellularLocation>
</comment>
<comment type="similarity">
    <text evidence="1">Belongs to the acetylglutamate kinase family. ArgB subfamily.</text>
</comment>
<sequence length="296" mass="31505">MTDLQSIAPRDKAEILAQALPYIRKFHGKTIVIKYGGNAMTDPALQADFAEDVVLLKLVGMNPVVVHGGGPQIETALKRLGKQGHFIQGMRVTDAETMEVVEWVLAGEVQQDIVGLINQAGGKAVGLTGRDGGLIRARKLKMVDKDDPSKEHDIGQVGDIVSIDPSVVKALQDDAFIPVISPLGFGEENESYNINADVVASKLATVLKAEKLMMLTNIPGVLNKSGALIPELTAREIDELVVDGTISGGMLPKIAGAIDAAKSGVNAVHIVDGRVPHAMLLEILTEQAYGTMIRSH</sequence>
<name>ARGB_PARC0</name>
<keyword id="KW-0028">Amino-acid biosynthesis</keyword>
<keyword id="KW-0055">Arginine biosynthesis</keyword>
<keyword id="KW-0067">ATP-binding</keyword>
<keyword id="KW-0963">Cytoplasm</keyword>
<keyword id="KW-0418">Kinase</keyword>
<keyword id="KW-0547">Nucleotide-binding</keyword>
<keyword id="KW-0808">Transferase</keyword>
<dbReference type="EC" id="2.7.2.8" evidence="1"/>
<dbReference type="EMBL" id="CP000512">
    <property type="protein sequence ID" value="ABM34680.1"/>
    <property type="molecule type" value="Genomic_DNA"/>
</dbReference>
<dbReference type="RefSeq" id="WP_011797154.1">
    <property type="nucleotide sequence ID" value="NC_008752.1"/>
</dbReference>
<dbReference type="SMR" id="A1TUP2"/>
<dbReference type="STRING" id="397945.Aave_4139"/>
<dbReference type="KEGG" id="aav:Aave_4139"/>
<dbReference type="eggNOG" id="COG0548">
    <property type="taxonomic scope" value="Bacteria"/>
</dbReference>
<dbReference type="HOGENOM" id="CLU_053680_0_0_4"/>
<dbReference type="OrthoDB" id="9803155at2"/>
<dbReference type="UniPathway" id="UPA00068">
    <property type="reaction ID" value="UER00107"/>
</dbReference>
<dbReference type="Proteomes" id="UP000002596">
    <property type="component" value="Chromosome"/>
</dbReference>
<dbReference type="GO" id="GO:0005737">
    <property type="term" value="C:cytoplasm"/>
    <property type="evidence" value="ECO:0007669"/>
    <property type="project" value="UniProtKB-SubCell"/>
</dbReference>
<dbReference type="GO" id="GO:0003991">
    <property type="term" value="F:acetylglutamate kinase activity"/>
    <property type="evidence" value="ECO:0007669"/>
    <property type="project" value="UniProtKB-UniRule"/>
</dbReference>
<dbReference type="GO" id="GO:0005524">
    <property type="term" value="F:ATP binding"/>
    <property type="evidence" value="ECO:0007669"/>
    <property type="project" value="UniProtKB-UniRule"/>
</dbReference>
<dbReference type="GO" id="GO:0042450">
    <property type="term" value="P:arginine biosynthetic process via ornithine"/>
    <property type="evidence" value="ECO:0007669"/>
    <property type="project" value="UniProtKB-UniRule"/>
</dbReference>
<dbReference type="GO" id="GO:0006526">
    <property type="term" value="P:L-arginine biosynthetic process"/>
    <property type="evidence" value="ECO:0007669"/>
    <property type="project" value="UniProtKB-UniPathway"/>
</dbReference>
<dbReference type="CDD" id="cd04250">
    <property type="entry name" value="AAK_NAGK-C"/>
    <property type="match status" value="1"/>
</dbReference>
<dbReference type="FunFam" id="3.40.1160.10:FF:000004">
    <property type="entry name" value="Acetylglutamate kinase"/>
    <property type="match status" value="1"/>
</dbReference>
<dbReference type="Gene3D" id="3.40.1160.10">
    <property type="entry name" value="Acetylglutamate kinase-like"/>
    <property type="match status" value="1"/>
</dbReference>
<dbReference type="HAMAP" id="MF_00082">
    <property type="entry name" value="ArgB"/>
    <property type="match status" value="1"/>
</dbReference>
<dbReference type="InterPro" id="IPR036393">
    <property type="entry name" value="AceGlu_kinase-like_sf"/>
</dbReference>
<dbReference type="InterPro" id="IPR004662">
    <property type="entry name" value="AcgluKinase_fam"/>
</dbReference>
<dbReference type="InterPro" id="IPR037528">
    <property type="entry name" value="ArgB"/>
</dbReference>
<dbReference type="InterPro" id="IPR001048">
    <property type="entry name" value="Asp/Glu/Uridylate_kinase"/>
</dbReference>
<dbReference type="InterPro" id="IPR001057">
    <property type="entry name" value="Glu/AcGlu_kinase"/>
</dbReference>
<dbReference type="InterPro" id="IPR041727">
    <property type="entry name" value="NAGK-C"/>
</dbReference>
<dbReference type="NCBIfam" id="TIGR00761">
    <property type="entry name" value="argB"/>
    <property type="match status" value="1"/>
</dbReference>
<dbReference type="PANTHER" id="PTHR23342">
    <property type="entry name" value="N-ACETYLGLUTAMATE SYNTHASE"/>
    <property type="match status" value="1"/>
</dbReference>
<dbReference type="PANTHER" id="PTHR23342:SF0">
    <property type="entry name" value="N-ACETYLGLUTAMATE SYNTHASE, MITOCHONDRIAL"/>
    <property type="match status" value="1"/>
</dbReference>
<dbReference type="Pfam" id="PF00696">
    <property type="entry name" value="AA_kinase"/>
    <property type="match status" value="1"/>
</dbReference>
<dbReference type="PIRSF" id="PIRSF000728">
    <property type="entry name" value="NAGK"/>
    <property type="match status" value="1"/>
</dbReference>
<dbReference type="PRINTS" id="PR00474">
    <property type="entry name" value="GLU5KINASE"/>
</dbReference>
<dbReference type="SUPFAM" id="SSF53633">
    <property type="entry name" value="Carbamate kinase-like"/>
    <property type="match status" value="1"/>
</dbReference>
<evidence type="ECO:0000255" key="1">
    <source>
        <dbReference type="HAMAP-Rule" id="MF_00082"/>
    </source>
</evidence>
<protein>
    <recommendedName>
        <fullName evidence="1">Acetylglutamate kinase</fullName>
        <ecNumber evidence="1">2.7.2.8</ecNumber>
    </recommendedName>
    <alternativeName>
        <fullName evidence="1">N-acetyl-L-glutamate 5-phosphotransferase</fullName>
    </alternativeName>
    <alternativeName>
        <fullName evidence="1">NAG kinase</fullName>
        <shortName evidence="1">NAGK</shortName>
    </alternativeName>
</protein>
<reference key="1">
    <citation type="submission" date="2006-12" db="EMBL/GenBank/DDBJ databases">
        <title>Complete sequence of Acidovorax avenae subsp. citrulli AAC00-1.</title>
        <authorList>
            <person name="Copeland A."/>
            <person name="Lucas S."/>
            <person name="Lapidus A."/>
            <person name="Barry K."/>
            <person name="Detter J.C."/>
            <person name="Glavina del Rio T."/>
            <person name="Dalin E."/>
            <person name="Tice H."/>
            <person name="Pitluck S."/>
            <person name="Kiss H."/>
            <person name="Brettin T."/>
            <person name="Bruce D."/>
            <person name="Han C."/>
            <person name="Tapia R."/>
            <person name="Gilna P."/>
            <person name="Schmutz J."/>
            <person name="Larimer F."/>
            <person name="Land M."/>
            <person name="Hauser L."/>
            <person name="Kyrpides N."/>
            <person name="Kim E."/>
            <person name="Stahl D."/>
            <person name="Richardson P."/>
        </authorList>
    </citation>
    <scope>NUCLEOTIDE SEQUENCE [LARGE SCALE GENOMIC DNA]</scope>
    <source>
        <strain>AAC00-1</strain>
    </source>
</reference>
<feature type="chain" id="PRO_1000010480" description="Acetylglutamate kinase">
    <location>
        <begin position="1"/>
        <end position="296"/>
    </location>
</feature>
<feature type="binding site" evidence="1">
    <location>
        <begin position="69"/>
        <end position="70"/>
    </location>
    <ligand>
        <name>substrate</name>
    </ligand>
</feature>
<feature type="binding site" evidence="1">
    <location>
        <position position="91"/>
    </location>
    <ligand>
        <name>substrate</name>
    </ligand>
</feature>
<feature type="binding site" evidence="1">
    <location>
        <position position="193"/>
    </location>
    <ligand>
        <name>substrate</name>
    </ligand>
</feature>
<feature type="site" description="Transition state stabilizer" evidence="1">
    <location>
        <position position="34"/>
    </location>
</feature>
<feature type="site" description="Transition state stabilizer" evidence="1">
    <location>
        <position position="253"/>
    </location>
</feature>
<gene>
    <name evidence="1" type="primary">argB</name>
    <name type="ordered locus">Aave_4139</name>
</gene>
<organism>
    <name type="scientific">Paracidovorax citrulli (strain AAC00-1)</name>
    <name type="common">Acidovorax citrulli</name>
    <dbReference type="NCBI Taxonomy" id="397945"/>
    <lineage>
        <taxon>Bacteria</taxon>
        <taxon>Pseudomonadati</taxon>
        <taxon>Pseudomonadota</taxon>
        <taxon>Betaproteobacteria</taxon>
        <taxon>Burkholderiales</taxon>
        <taxon>Comamonadaceae</taxon>
        <taxon>Paracidovorax</taxon>
    </lineage>
</organism>